<name>ENGB_METBF</name>
<protein>
    <recommendedName>
        <fullName evidence="1">Probable GTP-binding protein EngB</fullName>
    </recommendedName>
</protein>
<reference key="1">
    <citation type="journal article" date="2006" name="J. Bacteriol.">
        <title>The Methanosarcina barkeri genome: comparative analysis with Methanosarcina acetivorans and Methanosarcina mazei reveals extensive rearrangement within methanosarcinal genomes.</title>
        <authorList>
            <person name="Maeder D.L."/>
            <person name="Anderson I."/>
            <person name="Brettin T.S."/>
            <person name="Bruce D.C."/>
            <person name="Gilna P."/>
            <person name="Han C.S."/>
            <person name="Lapidus A."/>
            <person name="Metcalf W.W."/>
            <person name="Saunders E."/>
            <person name="Tapia R."/>
            <person name="Sowers K.R."/>
        </authorList>
    </citation>
    <scope>NUCLEOTIDE SEQUENCE [LARGE SCALE GENOMIC DNA]</scope>
    <source>
        <strain>Fusaro / DSM 804</strain>
    </source>
</reference>
<gene>
    <name evidence="1" type="primary">engB</name>
    <name type="ordered locus">Mbar_A1907</name>
</gene>
<proteinExistence type="inferred from homology"/>
<organism>
    <name type="scientific">Methanosarcina barkeri (strain Fusaro / DSM 804)</name>
    <dbReference type="NCBI Taxonomy" id="269797"/>
    <lineage>
        <taxon>Archaea</taxon>
        <taxon>Methanobacteriati</taxon>
        <taxon>Methanobacteriota</taxon>
        <taxon>Stenosarchaea group</taxon>
        <taxon>Methanomicrobia</taxon>
        <taxon>Methanosarcinales</taxon>
        <taxon>Methanosarcinaceae</taxon>
        <taxon>Methanosarcina</taxon>
    </lineage>
</organism>
<sequence>METSKTAAESGVSFEIIFVGRSNVGKSSLLRELFGAKVRVGKRPGVTLRPAHVQVSDLLITDMPGFGFMSGVKDRKQDIVKDKTVHYIEENAERIKLGVLVIDSPAFPQIVDRWDSKDQIPIDVEMFDFLREVGIDTIIAANKMDKVKESEYGSLLDEIAIRLGLESPWQNWKHIIAPISAKKGDIKALKGLLRDRLHEMKRDDLFKYV</sequence>
<keyword id="KW-0131">Cell cycle</keyword>
<keyword id="KW-0132">Cell division</keyword>
<keyword id="KW-0342">GTP-binding</keyword>
<keyword id="KW-0460">Magnesium</keyword>
<keyword id="KW-0479">Metal-binding</keyword>
<keyword id="KW-0547">Nucleotide-binding</keyword>
<keyword id="KW-0717">Septation</keyword>
<comment type="function">
    <text evidence="1">Necessary for normal cell division and for the maintenance of normal septation.</text>
</comment>
<comment type="cofactor">
    <cofactor evidence="1">
        <name>Mg(2+)</name>
        <dbReference type="ChEBI" id="CHEBI:18420"/>
    </cofactor>
</comment>
<comment type="similarity">
    <text evidence="1">Belongs to the TRAFAC class TrmE-Era-EngA-EngB-Septin-like GTPase superfamily. EngB GTPase family.</text>
</comment>
<accession>Q46B95</accession>
<feature type="chain" id="PRO_0000266989" description="Probable GTP-binding protein EngB">
    <location>
        <begin position="1"/>
        <end position="209"/>
    </location>
</feature>
<feature type="domain" description="EngB-type G" evidence="1">
    <location>
        <begin position="12"/>
        <end position="203"/>
    </location>
</feature>
<feature type="binding site" evidence="1">
    <location>
        <begin position="20"/>
        <end position="27"/>
    </location>
    <ligand>
        <name>GTP</name>
        <dbReference type="ChEBI" id="CHEBI:37565"/>
    </ligand>
</feature>
<feature type="binding site" evidence="1">
    <location>
        <position position="27"/>
    </location>
    <ligand>
        <name>Mg(2+)</name>
        <dbReference type="ChEBI" id="CHEBI:18420"/>
    </ligand>
</feature>
<feature type="binding site" evidence="1">
    <location>
        <begin position="45"/>
        <end position="49"/>
    </location>
    <ligand>
        <name>GTP</name>
        <dbReference type="ChEBI" id="CHEBI:37565"/>
    </ligand>
</feature>
<feature type="binding site" evidence="1">
    <location>
        <position position="47"/>
    </location>
    <ligand>
        <name>Mg(2+)</name>
        <dbReference type="ChEBI" id="CHEBI:18420"/>
    </ligand>
</feature>
<feature type="binding site" evidence="1">
    <location>
        <begin position="62"/>
        <end position="65"/>
    </location>
    <ligand>
        <name>GTP</name>
        <dbReference type="ChEBI" id="CHEBI:37565"/>
    </ligand>
</feature>
<feature type="binding site" evidence="1">
    <location>
        <begin position="142"/>
        <end position="145"/>
    </location>
    <ligand>
        <name>GTP</name>
        <dbReference type="ChEBI" id="CHEBI:37565"/>
    </ligand>
</feature>
<feature type="binding site" evidence="1">
    <location>
        <begin position="179"/>
        <end position="181"/>
    </location>
    <ligand>
        <name>GTP</name>
        <dbReference type="ChEBI" id="CHEBI:37565"/>
    </ligand>
</feature>
<evidence type="ECO:0000255" key="1">
    <source>
        <dbReference type="HAMAP-Rule" id="MF_00321"/>
    </source>
</evidence>
<dbReference type="EMBL" id="CP000099">
    <property type="protein sequence ID" value="AAZ70847.1"/>
    <property type="molecule type" value="Genomic_DNA"/>
</dbReference>
<dbReference type="SMR" id="Q46B95"/>
<dbReference type="STRING" id="269797.Mbar_A1907"/>
<dbReference type="PaxDb" id="269797-Mbar_A1907"/>
<dbReference type="KEGG" id="mba:Mbar_A1907"/>
<dbReference type="eggNOG" id="arCOG00355">
    <property type="taxonomic scope" value="Archaea"/>
</dbReference>
<dbReference type="HOGENOM" id="CLU_033732_3_0_2"/>
<dbReference type="OrthoDB" id="65113at2157"/>
<dbReference type="GO" id="GO:0005525">
    <property type="term" value="F:GTP binding"/>
    <property type="evidence" value="ECO:0007669"/>
    <property type="project" value="UniProtKB-UniRule"/>
</dbReference>
<dbReference type="GO" id="GO:0046872">
    <property type="term" value="F:metal ion binding"/>
    <property type="evidence" value="ECO:0007669"/>
    <property type="project" value="UniProtKB-KW"/>
</dbReference>
<dbReference type="GO" id="GO:0051301">
    <property type="term" value="P:cell division"/>
    <property type="evidence" value="ECO:0007669"/>
    <property type="project" value="UniProtKB-KW"/>
</dbReference>
<dbReference type="CDD" id="cd01876">
    <property type="entry name" value="YihA_EngB"/>
    <property type="match status" value="1"/>
</dbReference>
<dbReference type="Gene3D" id="3.40.50.300">
    <property type="entry name" value="P-loop containing nucleotide triphosphate hydrolases"/>
    <property type="match status" value="1"/>
</dbReference>
<dbReference type="HAMAP" id="MF_00321">
    <property type="entry name" value="GTPase_EngB"/>
    <property type="match status" value="1"/>
</dbReference>
<dbReference type="InterPro" id="IPR030393">
    <property type="entry name" value="G_ENGB_dom"/>
</dbReference>
<dbReference type="InterPro" id="IPR006073">
    <property type="entry name" value="GTP-bd"/>
</dbReference>
<dbReference type="InterPro" id="IPR019987">
    <property type="entry name" value="GTP-bd_ribosome_bio_YsxC"/>
</dbReference>
<dbReference type="InterPro" id="IPR027417">
    <property type="entry name" value="P-loop_NTPase"/>
</dbReference>
<dbReference type="NCBIfam" id="NF003255">
    <property type="entry name" value="PRK04213.1"/>
    <property type="match status" value="1"/>
</dbReference>
<dbReference type="PANTHER" id="PTHR11649:SF13">
    <property type="entry name" value="ENGB-TYPE G DOMAIN-CONTAINING PROTEIN"/>
    <property type="match status" value="1"/>
</dbReference>
<dbReference type="PANTHER" id="PTHR11649">
    <property type="entry name" value="MSS1/TRME-RELATED GTP-BINDING PROTEIN"/>
    <property type="match status" value="1"/>
</dbReference>
<dbReference type="Pfam" id="PF01926">
    <property type="entry name" value="MMR_HSR1"/>
    <property type="match status" value="1"/>
</dbReference>
<dbReference type="SUPFAM" id="SSF52540">
    <property type="entry name" value="P-loop containing nucleoside triphosphate hydrolases"/>
    <property type="match status" value="1"/>
</dbReference>
<dbReference type="PROSITE" id="PS51706">
    <property type="entry name" value="G_ENGB"/>
    <property type="match status" value="1"/>
</dbReference>